<dbReference type="EMBL" id="Y00325">
    <property type="protein sequence ID" value="CAA68420.1"/>
    <property type="molecule type" value="Genomic_DNA"/>
</dbReference>
<dbReference type="EMBL" id="D14698">
    <property type="protein sequence ID" value="BAA03525.1"/>
    <property type="molecule type" value="Genomic_DNA"/>
</dbReference>
<dbReference type="PIR" id="A93667">
    <property type="entry name" value="A93667"/>
</dbReference>
<dbReference type="SMR" id="P69420"/>
<dbReference type="OrthoDB" id="438052at2759"/>
<dbReference type="GO" id="GO:0031966">
    <property type="term" value="C:mitochondrial membrane"/>
    <property type="evidence" value="ECO:0007669"/>
    <property type="project" value="UniProtKB-SubCell"/>
</dbReference>
<dbReference type="GO" id="GO:0045259">
    <property type="term" value="C:proton-transporting ATP synthase complex"/>
    <property type="evidence" value="ECO:0007669"/>
    <property type="project" value="UniProtKB-KW"/>
</dbReference>
<dbReference type="GO" id="GO:0033177">
    <property type="term" value="C:proton-transporting two-sector ATPase complex, proton-transporting domain"/>
    <property type="evidence" value="ECO:0007669"/>
    <property type="project" value="InterPro"/>
</dbReference>
<dbReference type="GO" id="GO:0005524">
    <property type="term" value="F:ATP binding"/>
    <property type="evidence" value="ECO:0007669"/>
    <property type="project" value="UniProtKB-KW"/>
</dbReference>
<dbReference type="GO" id="GO:0008289">
    <property type="term" value="F:lipid binding"/>
    <property type="evidence" value="ECO:0007669"/>
    <property type="project" value="UniProtKB-KW"/>
</dbReference>
<dbReference type="GO" id="GO:0015078">
    <property type="term" value="F:proton transmembrane transporter activity"/>
    <property type="evidence" value="ECO:0007669"/>
    <property type="project" value="InterPro"/>
</dbReference>
<dbReference type="GO" id="GO:0015986">
    <property type="term" value="P:proton motive force-driven ATP synthesis"/>
    <property type="evidence" value="ECO:0007669"/>
    <property type="project" value="InterPro"/>
</dbReference>
<dbReference type="CDD" id="cd18182">
    <property type="entry name" value="ATP-synt_Fo_c_ATP5G3"/>
    <property type="match status" value="1"/>
</dbReference>
<dbReference type="FunFam" id="1.20.20.10:FF:000005">
    <property type="entry name" value="ATP synthase subunit 9, mitochondrial"/>
    <property type="match status" value="1"/>
</dbReference>
<dbReference type="Gene3D" id="1.20.20.10">
    <property type="entry name" value="F1F0 ATP synthase subunit C"/>
    <property type="match status" value="1"/>
</dbReference>
<dbReference type="HAMAP" id="MF_01396">
    <property type="entry name" value="ATP_synth_c_bact"/>
    <property type="match status" value="1"/>
</dbReference>
<dbReference type="InterPro" id="IPR000454">
    <property type="entry name" value="ATP_synth_F0_csu"/>
</dbReference>
<dbReference type="InterPro" id="IPR020537">
    <property type="entry name" value="ATP_synth_F0_csu_DDCD_BS"/>
</dbReference>
<dbReference type="InterPro" id="IPR038662">
    <property type="entry name" value="ATP_synth_F0_csu_sf"/>
</dbReference>
<dbReference type="InterPro" id="IPR002379">
    <property type="entry name" value="ATPase_proteolipid_c-like_dom"/>
</dbReference>
<dbReference type="InterPro" id="IPR035921">
    <property type="entry name" value="F/V-ATP_Csub_sf"/>
</dbReference>
<dbReference type="PANTHER" id="PTHR10031">
    <property type="entry name" value="ATP SYNTHASE LIPID-BINDING PROTEIN, MITOCHONDRIAL"/>
    <property type="match status" value="1"/>
</dbReference>
<dbReference type="PANTHER" id="PTHR10031:SF0">
    <property type="entry name" value="ATPASE PROTEIN 9"/>
    <property type="match status" value="1"/>
</dbReference>
<dbReference type="Pfam" id="PF00137">
    <property type="entry name" value="ATP-synt_C"/>
    <property type="match status" value="1"/>
</dbReference>
<dbReference type="PRINTS" id="PR00124">
    <property type="entry name" value="ATPASEC"/>
</dbReference>
<dbReference type="SUPFAM" id="SSF81333">
    <property type="entry name" value="F1F0 ATP synthase subunit C"/>
    <property type="match status" value="1"/>
</dbReference>
<dbReference type="PROSITE" id="PS00605">
    <property type="entry name" value="ATPASE_C"/>
    <property type="match status" value="1"/>
</dbReference>
<organism>
    <name type="scientific">Pisum sativum</name>
    <name type="common">Garden pea</name>
    <name type="synonym">Lathyrus oleraceus</name>
    <dbReference type="NCBI Taxonomy" id="3888"/>
    <lineage>
        <taxon>Eukaryota</taxon>
        <taxon>Viridiplantae</taxon>
        <taxon>Streptophyta</taxon>
        <taxon>Embryophyta</taxon>
        <taxon>Tracheophyta</taxon>
        <taxon>Spermatophyta</taxon>
        <taxon>Magnoliopsida</taxon>
        <taxon>eudicotyledons</taxon>
        <taxon>Gunneridae</taxon>
        <taxon>Pentapetalae</taxon>
        <taxon>rosids</taxon>
        <taxon>fabids</taxon>
        <taxon>Fabales</taxon>
        <taxon>Fabaceae</taxon>
        <taxon>Papilionoideae</taxon>
        <taxon>50 kb inversion clade</taxon>
        <taxon>NPAAA clade</taxon>
        <taxon>Hologalegina</taxon>
        <taxon>IRL clade</taxon>
        <taxon>Fabeae</taxon>
        <taxon>Pisum</taxon>
    </lineage>
</organism>
<proteinExistence type="inferred from homology"/>
<geneLocation type="mitochondrion"/>
<protein>
    <recommendedName>
        <fullName>ATP synthase subunit 9, mitochondrial</fullName>
    </recommendedName>
    <alternativeName>
        <fullName>Lipid-binding protein</fullName>
    </alternativeName>
</protein>
<sequence>MLEGAKSIGAGAATIASAGAAVGIGNVFSSLIHSVARNPSLAKQLFGYAILGFALTEAIALFALMMAFLILFVF</sequence>
<evidence type="ECO:0000250" key="1"/>
<evidence type="ECO:0000255" key="2"/>
<evidence type="ECO:0000305" key="3"/>
<comment type="function">
    <text>This protein is one of the chains of the nonenzymatic membrane component (F0) of mitochondrial ATPase.</text>
</comment>
<comment type="subunit">
    <text>F-type ATPases have 2 components, CF(1) - the catalytic core - and CF(0) - the membrane proton channel. CF(1) has five subunits: alpha(3), beta(3), gamma(1), delta(1), epsilon(1). CF(0) has three main subunits: a, b and c.</text>
</comment>
<comment type="subcellular location">
    <subcellularLocation>
        <location evidence="3">Mitochondrion membrane</location>
        <topology evidence="3">Multi-pass membrane protein</topology>
    </subcellularLocation>
</comment>
<comment type="similarity">
    <text evidence="3">Belongs to the ATPase C chain family.</text>
</comment>
<feature type="chain" id="PRO_0000112219" description="ATP synthase subunit 9, mitochondrial">
    <location>
        <begin position="1"/>
        <end position="74"/>
    </location>
</feature>
<feature type="transmembrane region" description="Helical" evidence="2">
    <location>
        <begin position="8"/>
        <end position="28"/>
    </location>
</feature>
<feature type="transmembrane region" description="Helical" evidence="2">
    <location>
        <begin position="45"/>
        <end position="72"/>
    </location>
</feature>
<feature type="site" description="Reversibly protonated during proton transport" evidence="1">
    <location>
        <position position="57"/>
    </location>
</feature>
<reference key="1">
    <citation type="journal article" date="1987" name="Nucleic Acids Res.">
        <title>The pea mitochondrial ATPase subunit 9 gene is located upstream of the ATPase alpha-subunit gene.</title>
        <authorList>
            <person name="Morikami A."/>
            <person name="Nakamura K."/>
        </authorList>
    </citation>
    <scope>NUCLEOTIDE SEQUENCE [GENOMIC DNA]</scope>
    <source>
        <strain>cv. Alaska</strain>
    </source>
</reference>
<reference key="2">
    <citation type="journal article" date="1993" name="Biosci. Biotechnol. Biochem.">
        <title>Transcript map of oppositely oriented pea mitochondrial genes encoding the alpha-subunit and the subunit 9 of F1F0-ATPase complex.</title>
        <authorList>
            <person name="Morikami A."/>
            <person name="Nakamura K."/>
        </authorList>
    </citation>
    <scope>NUCLEOTIDE SEQUENCE [GENOMIC DNA]</scope>
    <source>
        <strain>cv. Alaska</strain>
    </source>
</reference>
<keyword id="KW-0067">ATP-binding</keyword>
<keyword id="KW-0138">CF(0)</keyword>
<keyword id="KW-0375">Hydrogen ion transport</keyword>
<keyword id="KW-0406">Ion transport</keyword>
<keyword id="KW-0446">Lipid-binding</keyword>
<keyword id="KW-0472">Membrane</keyword>
<keyword id="KW-0496">Mitochondrion</keyword>
<keyword id="KW-0547">Nucleotide-binding</keyword>
<keyword id="KW-0812">Transmembrane</keyword>
<keyword id="KW-1133">Transmembrane helix</keyword>
<keyword id="KW-0813">Transport</keyword>
<name>ATP9_PEA</name>
<gene>
    <name type="primary">ATP9</name>
</gene>
<accession>P69420</accession>
<accession>P05717</accession>